<proteinExistence type="evidence at protein level"/>
<organism>
    <name type="scientific">Mus musculus</name>
    <name type="common">Mouse</name>
    <dbReference type="NCBI Taxonomy" id="10090"/>
    <lineage>
        <taxon>Eukaryota</taxon>
        <taxon>Metazoa</taxon>
        <taxon>Chordata</taxon>
        <taxon>Craniata</taxon>
        <taxon>Vertebrata</taxon>
        <taxon>Euteleostomi</taxon>
        <taxon>Mammalia</taxon>
        <taxon>Eutheria</taxon>
        <taxon>Euarchontoglires</taxon>
        <taxon>Glires</taxon>
        <taxon>Rodentia</taxon>
        <taxon>Myomorpha</taxon>
        <taxon>Muroidea</taxon>
        <taxon>Muridae</taxon>
        <taxon>Murinae</taxon>
        <taxon>Mus</taxon>
        <taxon>Mus</taxon>
    </lineage>
</organism>
<comment type="function">
    <text evidence="4">Catalyzes the hydrolysis of nucleotide monophosphates, releasing inorganic phosphate and the corresponding nucleoside, AMP is the major substrate.</text>
</comment>
<comment type="catalytic activity">
    <reaction evidence="4">
        <text>a ribonucleoside 5'-phosphate + H2O = a ribonucleoside + phosphate</text>
        <dbReference type="Rhea" id="RHEA:12484"/>
        <dbReference type="ChEBI" id="CHEBI:15377"/>
        <dbReference type="ChEBI" id="CHEBI:18254"/>
        <dbReference type="ChEBI" id="CHEBI:43474"/>
        <dbReference type="ChEBI" id="CHEBI:58043"/>
        <dbReference type="EC" id="3.1.3.5"/>
    </reaction>
</comment>
<comment type="catalytic activity">
    <reaction evidence="4">
        <text>AMP + H2O = adenosine + phosphate</text>
        <dbReference type="Rhea" id="RHEA:29375"/>
        <dbReference type="ChEBI" id="CHEBI:15377"/>
        <dbReference type="ChEBI" id="CHEBI:16335"/>
        <dbReference type="ChEBI" id="CHEBI:43474"/>
        <dbReference type="ChEBI" id="CHEBI:456215"/>
    </reaction>
</comment>
<comment type="cofactor">
    <cofactor evidence="2">
        <name>Mg(2+)</name>
        <dbReference type="ChEBI" id="CHEBI:18420"/>
    </cofactor>
</comment>
<comment type="activity regulation">
    <text evidence="4">Activated by ADP.</text>
</comment>
<comment type="subcellular location">
    <subcellularLocation>
        <location evidence="2">Cytoplasm</location>
    </subcellularLocation>
</comment>
<comment type="alternative products">
    <event type="alternative splicing"/>
    <isoform>
        <id>Q91YE9-1</id>
        <name>1</name>
        <sequence type="displayed"/>
    </isoform>
    <isoform>
        <id>Q91YE9-2</id>
        <name>2</name>
        <sequence type="described" ref="VSP_010204 VSP_010205"/>
    </isoform>
</comment>
<comment type="tissue specificity">
    <text evidence="4">Expressed at highest levels in testis. Also expressed in brain, skeletal muscle, kidney and heart.</text>
</comment>
<comment type="similarity">
    <text evidence="6">Belongs to the 5'-nucleotidase type 3 family.</text>
</comment>
<comment type="sequence caution" evidence="6">
    <conflict type="erroneous initiation">
        <sequence resource="EMBL-CDS" id="AAK39109"/>
    </conflict>
</comment>
<protein>
    <recommendedName>
        <fullName>Cytosolic 5'-nucleotidase 1B</fullName>
        <shortName>cN1B</shortName>
        <ecNumber evidence="4">3.1.3.5</ecNumber>
    </recommendedName>
    <alternativeName>
        <fullName>Autoimmune infertility-related protein</fullName>
    </alternativeName>
    <alternativeName>
        <fullName>Cytosolic 5'-nucleotidase IB</fullName>
        <shortName>cN-IB</shortName>
    </alternativeName>
</protein>
<keyword id="KW-0025">Alternative splicing</keyword>
<keyword id="KW-0963">Cytoplasm</keyword>
<keyword id="KW-0378">Hydrolase</keyword>
<keyword id="KW-0460">Magnesium</keyword>
<keyword id="KW-0546">Nucleotide metabolism</keyword>
<keyword id="KW-1185">Reference proteome</keyword>
<name>5NT1B_MOUSE</name>
<feature type="chain" id="PRO_0000144797" description="Cytosolic 5'-nucleotidase 1B">
    <location>
        <begin position="1"/>
        <end position="573"/>
    </location>
</feature>
<feature type="region of interest" description="Disordered" evidence="3">
    <location>
        <begin position="1"/>
        <end position="200"/>
    </location>
</feature>
<feature type="region of interest" description="Disordered" evidence="3">
    <location>
        <begin position="218"/>
        <end position="238"/>
    </location>
</feature>
<feature type="compositionally biased region" description="Basic residues" evidence="3">
    <location>
        <begin position="1"/>
        <end position="11"/>
    </location>
</feature>
<feature type="compositionally biased region" description="Basic and acidic residues" evidence="3">
    <location>
        <begin position="12"/>
        <end position="35"/>
    </location>
</feature>
<feature type="compositionally biased region" description="Polar residues" evidence="3">
    <location>
        <begin position="60"/>
        <end position="73"/>
    </location>
</feature>
<feature type="compositionally biased region" description="Low complexity" evidence="3">
    <location>
        <begin position="93"/>
        <end position="105"/>
    </location>
</feature>
<feature type="compositionally biased region" description="Polar residues" evidence="3">
    <location>
        <begin position="115"/>
        <end position="136"/>
    </location>
</feature>
<feature type="compositionally biased region" description="Basic and acidic residues" evidence="3">
    <location>
        <begin position="161"/>
        <end position="174"/>
    </location>
</feature>
<feature type="compositionally biased region" description="Basic and acidic residues" evidence="3">
    <location>
        <begin position="182"/>
        <end position="194"/>
    </location>
</feature>
<feature type="active site" description="Nucleophile" evidence="1">
    <location>
        <position position="428"/>
    </location>
</feature>
<feature type="splice variant" id="VSP_010204" description="In isoform 2." evidence="5">
    <location>
        <begin position="88"/>
        <end position="89"/>
    </location>
</feature>
<feature type="splice variant" id="VSP_010205" description="In isoform 2." evidence="5">
    <location>
        <begin position="247"/>
        <end position="262"/>
    </location>
</feature>
<feature type="sequence conflict" description="In Ref. 2; AAK39109." evidence="6" ref="2">
    <original>S</original>
    <variation>F</variation>
    <location>
        <position position="103"/>
    </location>
</feature>
<feature type="sequence conflict" description="In Ref. 1; CAC44364 and 2; AAK39109." evidence="6" ref="1 2">
    <original>I</original>
    <variation>T</variation>
    <location>
        <position position="121"/>
    </location>
</feature>
<feature type="sequence conflict" description="In Ref. 1; CAC44364." evidence="6" ref="1">
    <original>A</original>
    <variation>V</variation>
    <location>
        <position position="162"/>
    </location>
</feature>
<feature type="sequence conflict" description="In Ref. 1; CAC44364." evidence="6" ref="1">
    <original>E</original>
    <variation>Q</variation>
    <location>
        <position position="185"/>
    </location>
</feature>
<feature type="sequence conflict" description="In Ref. 1; CAC44364." evidence="6" ref="1">
    <original>Q</original>
    <variation>H</variation>
    <location>
        <position position="228"/>
    </location>
</feature>
<accession>Q91YE9</accession>
<accession>E9QNH2</accession>
<accession>Q91Y48</accession>
<dbReference type="EC" id="3.1.3.5" evidence="4"/>
<dbReference type="EMBL" id="AJ295253">
    <property type="protein sequence ID" value="CAC44364.1"/>
    <property type="molecule type" value="mRNA"/>
</dbReference>
<dbReference type="EMBL" id="AF356186">
    <property type="protein sequence ID" value="AAK39109.1"/>
    <property type="status" value="ALT_INIT"/>
    <property type="molecule type" value="mRNA"/>
</dbReference>
<dbReference type="EMBL" id="AC157570">
    <property type="status" value="NOT_ANNOTATED_CDS"/>
    <property type="molecule type" value="Genomic_DNA"/>
</dbReference>
<dbReference type="CCDS" id="CCDS25810.1">
    <molecule id="Q91YE9-1"/>
</dbReference>
<dbReference type="CCDS" id="CCDS79106.1">
    <molecule id="Q91YE9-2"/>
</dbReference>
<dbReference type="RefSeq" id="NP_001297511.1">
    <molecule id="Q91YE9-2"/>
    <property type="nucleotide sequence ID" value="NM_001310582.1"/>
</dbReference>
<dbReference type="RefSeq" id="NP_081864.2">
    <molecule id="Q91YE9-1"/>
    <property type="nucleotide sequence ID" value="NM_027588.3"/>
</dbReference>
<dbReference type="FunCoup" id="Q91YE9">
    <property type="interactions" value="367"/>
</dbReference>
<dbReference type="STRING" id="10090.ENSMUSP00000002456"/>
<dbReference type="GlyGen" id="Q91YE9">
    <property type="glycosylation" value="1 site"/>
</dbReference>
<dbReference type="iPTMnet" id="Q91YE9"/>
<dbReference type="PhosphoSitePlus" id="Q91YE9"/>
<dbReference type="PaxDb" id="10090-ENSMUSP00000002456"/>
<dbReference type="ProteomicsDB" id="296421">
    <molecule id="Q91YE9-1"/>
</dbReference>
<dbReference type="ProteomicsDB" id="296422">
    <molecule id="Q91YE9-2"/>
</dbReference>
<dbReference type="Ensembl" id="ENSMUST00000002456.10">
    <molecule id="Q91YE9-1"/>
    <property type="protein sequence ID" value="ENSMUSP00000002456.9"/>
    <property type="gene ID" value="ENSMUSG00000020622.18"/>
</dbReference>
<dbReference type="Ensembl" id="ENSMUST00000118657.8">
    <molecule id="Q91YE9-2"/>
    <property type="protein sequence ID" value="ENSMUSP00000112694.2"/>
    <property type="gene ID" value="ENSMUSG00000020622.18"/>
</dbReference>
<dbReference type="GeneID" id="70881"/>
<dbReference type="KEGG" id="mmu:70881"/>
<dbReference type="UCSC" id="uc007nap.2">
    <molecule id="Q91YE9-1"/>
    <property type="organism name" value="mouse"/>
</dbReference>
<dbReference type="AGR" id="MGI:1918131"/>
<dbReference type="CTD" id="93034"/>
<dbReference type="MGI" id="MGI:1918131">
    <property type="gene designation" value="Nt5c1b"/>
</dbReference>
<dbReference type="VEuPathDB" id="HostDB:ENSMUSG00000020622"/>
<dbReference type="eggNOG" id="ENOG502QRJF">
    <property type="taxonomic scope" value="Eukaryota"/>
</dbReference>
<dbReference type="GeneTree" id="ENSGT00390000017767"/>
<dbReference type="HOGENOM" id="CLU_035579_0_0_1"/>
<dbReference type="InParanoid" id="Q91YE9"/>
<dbReference type="OrthoDB" id="9994138at2759"/>
<dbReference type="PhylomeDB" id="Q91YE9"/>
<dbReference type="TreeFam" id="TF329831"/>
<dbReference type="Reactome" id="R-MMU-74259">
    <property type="pathway name" value="Purine catabolism"/>
</dbReference>
<dbReference type="SABIO-RK" id="Q91YE9"/>
<dbReference type="BioGRID-ORCS" id="70881">
    <property type="hits" value="1 hit in 77 CRISPR screens"/>
</dbReference>
<dbReference type="ChiTaRS" id="Nt5c1b">
    <property type="organism name" value="mouse"/>
</dbReference>
<dbReference type="PRO" id="PR:Q91YE9"/>
<dbReference type="Proteomes" id="UP000000589">
    <property type="component" value="Chromosome 12"/>
</dbReference>
<dbReference type="RNAct" id="Q91YE9">
    <property type="molecule type" value="protein"/>
</dbReference>
<dbReference type="Bgee" id="ENSMUSG00000020622">
    <property type="expression patterns" value="Expressed in seminiferous tubule of testis and 13 other cell types or tissues"/>
</dbReference>
<dbReference type="ExpressionAtlas" id="Q91YE9">
    <property type="expression patterns" value="baseline and differential"/>
</dbReference>
<dbReference type="GO" id="GO:0005829">
    <property type="term" value="C:cytosol"/>
    <property type="evidence" value="ECO:0000314"/>
    <property type="project" value="MGI"/>
</dbReference>
<dbReference type="GO" id="GO:0008253">
    <property type="term" value="F:5'-nucleotidase activity"/>
    <property type="evidence" value="ECO:0000314"/>
    <property type="project" value="UniProtKB"/>
</dbReference>
<dbReference type="GO" id="GO:0000287">
    <property type="term" value="F:magnesium ion binding"/>
    <property type="evidence" value="ECO:0007669"/>
    <property type="project" value="InterPro"/>
</dbReference>
<dbReference type="GO" id="GO:0000166">
    <property type="term" value="F:nucleotide binding"/>
    <property type="evidence" value="ECO:0007669"/>
    <property type="project" value="InterPro"/>
</dbReference>
<dbReference type="GO" id="GO:0000255">
    <property type="term" value="P:allantoin metabolic process"/>
    <property type="evidence" value="ECO:0000314"/>
    <property type="project" value="MGI"/>
</dbReference>
<dbReference type="GO" id="GO:0043605">
    <property type="term" value="P:amide catabolic process"/>
    <property type="evidence" value="ECO:0000314"/>
    <property type="project" value="MGI"/>
</dbReference>
<dbReference type="GO" id="GO:0006196">
    <property type="term" value="P:AMP catabolic process"/>
    <property type="evidence" value="ECO:0000314"/>
    <property type="project" value="MGI"/>
</dbReference>
<dbReference type="GO" id="GO:0009116">
    <property type="term" value="P:nucleoside metabolic process"/>
    <property type="evidence" value="ECO:0000314"/>
    <property type="project" value="MGI"/>
</dbReference>
<dbReference type="InterPro" id="IPR010394">
    <property type="entry name" value="5-nucleotidase"/>
</dbReference>
<dbReference type="PANTHER" id="PTHR31367">
    <property type="entry name" value="CYTOSOLIC 5'-NUCLEOTIDASE 1 FAMILY MEMBER"/>
    <property type="match status" value="1"/>
</dbReference>
<dbReference type="PANTHER" id="PTHR31367:SF0">
    <property type="entry name" value="CYTOSOLIC 5'-NUCLEOTIDASE 1B"/>
    <property type="match status" value="1"/>
</dbReference>
<dbReference type="Pfam" id="PF06189">
    <property type="entry name" value="5-nucleotidase"/>
    <property type="match status" value="1"/>
</dbReference>
<sequence length="573" mass="65002">MSQTSLKHKKKNEPGMRYSKESLDAEKRKDSDKTGARLSTQGSQELPLHNTDSRGYVVRNQWSRTSRSPSTGAPSVDEPRSRNTAIKVEAPNSSTTSRTSSASPSQHETSPPPQTSEKSSIQQTPQNRPITQLESQPPTPPETEPNSRRTSAKMYTGSDPWAHRENREPRDLQLRDYAYSCDSREGMPKTREYPRTPPTEWKPYAQRRLQYGTSVDMEPEYISDGPQQRQRQQTEEDEVDEAYWTSVSMLYEKIPSCARPRPPKPKHAITIAVSSRALFNMVDDRKIYEEEGLEKYMEYQLTNENVILTPGPAFRFVKALQHVNSRLRDLYPDEQDLFDIVLMTNNHAQVGVRLINSVNHYGLLIDRFCLTGGKSPIGYLKAYLTNLYLSADSEKVQEAIKEGIASATMYAGAKDMAYCDTQLRVAFDGDAVLFSDESEHIAKDHGLDKFFQHETLFENKPLAQGPLKSFLEDLGKLQKKFYAKDERLLCPIRTYLVTARSAASSGARVLKTLRRWGLEIDEALFLAGAPKGPILVKIRPHIFFDDQMFHIESAQKFGTITAHVPYGIAQKRN</sequence>
<reference key="1">
    <citation type="journal article" date="2001" name="Biochim. Biophys. Acta">
        <title>Cloning of a mouse cytosolic 5'-nucleotidase-I identifies a new gene related to human autoimmune infertility-related protein.</title>
        <authorList>
            <person name="Sala-Newby G.B."/>
            <person name="Newby A.C."/>
        </authorList>
    </citation>
    <scope>NUCLEOTIDE SEQUENCE [MRNA] (ISOFORM 1)</scope>
    <scope>FUNCTION</scope>
    <scope>CATALYTIC ACTIVITY</scope>
    <scope>TISSUE SPECIFICITY</scope>
    <scope>ACTIVITY REGULATION</scope>
    <source>
        <tissue>Testis</tissue>
    </source>
</reference>
<reference key="2">
    <citation type="submission" date="2001-03" db="EMBL/GenBank/DDBJ databases">
        <title>Isolation of a novel human testis cDNA encoding a polypeptide related to autoimmune infertility.</title>
        <authorList>
            <person name="Setiady Y.Y."/>
            <person name="Pujianto D.A."/>
            <person name="Ekowati A.L."/>
            <person name="Harahap A."/>
            <person name="Marzuki S."/>
        </authorList>
    </citation>
    <scope>NUCLEOTIDE SEQUENCE [MRNA] (ISOFORM 2)</scope>
    <source>
        <strain>CD-1</strain>
        <tissue>Testis</tissue>
    </source>
</reference>
<reference key="3">
    <citation type="journal article" date="2009" name="PLoS Biol.">
        <title>Lineage-specific biology revealed by a finished genome assembly of the mouse.</title>
        <authorList>
            <person name="Church D.M."/>
            <person name="Goodstadt L."/>
            <person name="Hillier L.W."/>
            <person name="Zody M.C."/>
            <person name="Goldstein S."/>
            <person name="She X."/>
            <person name="Bult C.J."/>
            <person name="Agarwala R."/>
            <person name="Cherry J.L."/>
            <person name="DiCuccio M."/>
            <person name="Hlavina W."/>
            <person name="Kapustin Y."/>
            <person name="Meric P."/>
            <person name="Maglott D."/>
            <person name="Birtle Z."/>
            <person name="Marques A.C."/>
            <person name="Graves T."/>
            <person name="Zhou S."/>
            <person name="Teague B."/>
            <person name="Potamousis K."/>
            <person name="Churas C."/>
            <person name="Place M."/>
            <person name="Herschleb J."/>
            <person name="Runnheim R."/>
            <person name="Forrest D."/>
            <person name="Amos-Landgraf J."/>
            <person name="Schwartz D.C."/>
            <person name="Cheng Z."/>
            <person name="Lindblad-Toh K."/>
            <person name="Eichler E.E."/>
            <person name="Ponting C.P."/>
        </authorList>
    </citation>
    <scope>NUCLEOTIDE SEQUENCE [LARGE SCALE GENOMIC DNA]</scope>
    <source>
        <strain>C57BL/6J</strain>
    </source>
</reference>
<gene>
    <name type="primary">Nt5c1b</name>
    <name type="synonym">Airp</name>
</gene>
<evidence type="ECO:0000250" key="1"/>
<evidence type="ECO:0000250" key="2">
    <source>
        <dbReference type="UniProtKB" id="Q9BXI3"/>
    </source>
</evidence>
<evidence type="ECO:0000256" key="3">
    <source>
        <dbReference type="SAM" id="MobiDB-lite"/>
    </source>
</evidence>
<evidence type="ECO:0000269" key="4">
    <source>
    </source>
</evidence>
<evidence type="ECO:0000303" key="5">
    <source ref="2"/>
</evidence>
<evidence type="ECO:0000305" key="6"/>